<accession>Q73FR5</accession>
<feature type="chain" id="PRO_0000349854" description="tRNA-specific 2-thiouridylase MnmA">
    <location>
        <begin position="1"/>
        <end position="370"/>
    </location>
</feature>
<feature type="region of interest" description="Interaction with tRNA" evidence="1">
    <location>
        <begin position="165"/>
        <end position="167"/>
    </location>
</feature>
<feature type="active site" description="Nucleophile" evidence="1">
    <location>
        <position position="119"/>
    </location>
</feature>
<feature type="active site" description="Cysteine persulfide intermediate" evidence="1">
    <location>
        <position position="215"/>
    </location>
</feature>
<feature type="binding site" evidence="1">
    <location>
        <begin position="24"/>
        <end position="31"/>
    </location>
    <ligand>
        <name>ATP</name>
        <dbReference type="ChEBI" id="CHEBI:30616"/>
    </ligand>
</feature>
<feature type="binding site" evidence="1">
    <location>
        <position position="50"/>
    </location>
    <ligand>
        <name>ATP</name>
        <dbReference type="ChEBI" id="CHEBI:30616"/>
    </ligand>
</feature>
<feature type="binding site" evidence="1">
    <location>
        <position position="143"/>
    </location>
    <ligand>
        <name>ATP</name>
        <dbReference type="ChEBI" id="CHEBI:30616"/>
    </ligand>
</feature>
<feature type="site" description="Interaction with tRNA" evidence="1">
    <location>
        <position position="144"/>
    </location>
</feature>
<feature type="site" description="Interaction with tRNA" evidence="1">
    <location>
        <position position="352"/>
    </location>
</feature>
<feature type="disulfide bond" description="Alternate" evidence="1">
    <location>
        <begin position="119"/>
        <end position="215"/>
    </location>
</feature>
<organism>
    <name type="scientific">Wolbachia pipientis wMel</name>
    <dbReference type="NCBI Taxonomy" id="163164"/>
    <lineage>
        <taxon>Bacteria</taxon>
        <taxon>Pseudomonadati</taxon>
        <taxon>Pseudomonadota</taxon>
        <taxon>Alphaproteobacteria</taxon>
        <taxon>Rickettsiales</taxon>
        <taxon>Anaplasmataceae</taxon>
        <taxon>Wolbachieae</taxon>
        <taxon>Wolbachia</taxon>
    </lineage>
</organism>
<reference key="1">
    <citation type="journal article" date="2004" name="PLoS Biol.">
        <title>Phylogenomics of the reproductive parasite Wolbachia pipientis wMel: a streamlined genome overrun by mobile genetic elements.</title>
        <authorList>
            <person name="Wu M."/>
            <person name="Sun L.V."/>
            <person name="Vamathevan J.J."/>
            <person name="Riegler M."/>
            <person name="DeBoy R.T."/>
            <person name="Brownlie J.C."/>
            <person name="McGraw E.A."/>
            <person name="Martin W."/>
            <person name="Esser C."/>
            <person name="Ahmadinejad N."/>
            <person name="Wiegand C."/>
            <person name="Madupu R."/>
            <person name="Beanan M.J."/>
            <person name="Brinkac L.M."/>
            <person name="Daugherty S.C."/>
            <person name="Durkin A.S."/>
            <person name="Kolonay J.F."/>
            <person name="Nelson W.C."/>
            <person name="Mohamoud Y."/>
            <person name="Lee P."/>
            <person name="Berry K.J."/>
            <person name="Young M.B."/>
            <person name="Utterback T.R."/>
            <person name="Weidman J.F."/>
            <person name="Nierman W.C."/>
            <person name="Paulsen I.T."/>
            <person name="Nelson K.E."/>
            <person name="Tettelin H."/>
            <person name="O'Neill S.L."/>
            <person name="Eisen J.A."/>
        </authorList>
    </citation>
    <scope>NUCLEOTIDE SEQUENCE [LARGE SCALE GENOMIC DNA]</scope>
</reference>
<sequence length="370" mass="41015">MLKEFEIEPLLKDKAPHQTKAVVAMSGGVDSSVAAALLHNLGYKVVGVTLQLYGTDGNANARKGACCAGQDIYDAKRVAESVGFPHYLLNYEEIFKKEVIEDFASTYMRGETPIPCVRCNQTVKFRDLLQVTKNLGADVLVTGHYVRRLEKNGEVKLCRSIDKSKDQSYFLFATTQEQLKLLRFPLGGFYKSDIRKLAKYFSLQISEKQDSQDICFVSESYSKTIAKLAPQSVQKGKIVDVNGKVLGEHSGIVNFTVGQRKGLGIAHNEPLYVIKINTENNEVIVGPINVLMQKKILIKELNWLEQPKEGMEVTVKLRSSHVGSLATIHSTDEKNKACVILNDDYFGISPGQACVAYKDEQVIGGGWICS</sequence>
<comment type="function">
    <text evidence="1">Catalyzes the 2-thiolation of uridine at the wobble position (U34) of tRNA, leading to the formation of s(2)U34.</text>
</comment>
<comment type="catalytic activity">
    <reaction evidence="1">
        <text>S-sulfanyl-L-cysteinyl-[protein] + uridine(34) in tRNA + AH2 + ATP = 2-thiouridine(34) in tRNA + L-cysteinyl-[protein] + A + AMP + diphosphate + H(+)</text>
        <dbReference type="Rhea" id="RHEA:47032"/>
        <dbReference type="Rhea" id="RHEA-COMP:10131"/>
        <dbReference type="Rhea" id="RHEA-COMP:11726"/>
        <dbReference type="Rhea" id="RHEA-COMP:11727"/>
        <dbReference type="Rhea" id="RHEA-COMP:11728"/>
        <dbReference type="ChEBI" id="CHEBI:13193"/>
        <dbReference type="ChEBI" id="CHEBI:15378"/>
        <dbReference type="ChEBI" id="CHEBI:17499"/>
        <dbReference type="ChEBI" id="CHEBI:29950"/>
        <dbReference type="ChEBI" id="CHEBI:30616"/>
        <dbReference type="ChEBI" id="CHEBI:33019"/>
        <dbReference type="ChEBI" id="CHEBI:61963"/>
        <dbReference type="ChEBI" id="CHEBI:65315"/>
        <dbReference type="ChEBI" id="CHEBI:87170"/>
        <dbReference type="ChEBI" id="CHEBI:456215"/>
        <dbReference type="EC" id="2.8.1.13"/>
    </reaction>
</comment>
<comment type="subcellular location">
    <subcellularLocation>
        <location evidence="1">Cytoplasm</location>
    </subcellularLocation>
</comment>
<comment type="similarity">
    <text evidence="1">Belongs to the MnmA/TRMU family.</text>
</comment>
<name>MNMA_WOLPM</name>
<dbReference type="EC" id="2.8.1.13" evidence="1"/>
<dbReference type="EMBL" id="AE017196">
    <property type="protein sequence ID" value="AAS14904.1"/>
    <property type="molecule type" value="Genomic_DNA"/>
</dbReference>
<dbReference type="RefSeq" id="WP_010963136.1">
    <property type="nucleotide sequence ID" value="NZ_OX384529.1"/>
</dbReference>
<dbReference type="SMR" id="Q73FR5"/>
<dbReference type="EnsemblBacteria" id="AAS14904">
    <property type="protein sequence ID" value="AAS14904"/>
    <property type="gene ID" value="WD_1259"/>
</dbReference>
<dbReference type="GeneID" id="70036728"/>
<dbReference type="KEGG" id="wol:WD_1259"/>
<dbReference type="eggNOG" id="COG0482">
    <property type="taxonomic scope" value="Bacteria"/>
</dbReference>
<dbReference type="Proteomes" id="UP000008215">
    <property type="component" value="Chromosome"/>
</dbReference>
<dbReference type="GO" id="GO:0005737">
    <property type="term" value="C:cytoplasm"/>
    <property type="evidence" value="ECO:0007669"/>
    <property type="project" value="UniProtKB-SubCell"/>
</dbReference>
<dbReference type="GO" id="GO:0005524">
    <property type="term" value="F:ATP binding"/>
    <property type="evidence" value="ECO:0007669"/>
    <property type="project" value="UniProtKB-KW"/>
</dbReference>
<dbReference type="GO" id="GO:0000049">
    <property type="term" value="F:tRNA binding"/>
    <property type="evidence" value="ECO:0007669"/>
    <property type="project" value="UniProtKB-KW"/>
</dbReference>
<dbReference type="GO" id="GO:0103016">
    <property type="term" value="F:tRNA-uridine 2-sulfurtransferase activity"/>
    <property type="evidence" value="ECO:0007669"/>
    <property type="project" value="UniProtKB-EC"/>
</dbReference>
<dbReference type="GO" id="GO:0002143">
    <property type="term" value="P:tRNA wobble position uridine thiolation"/>
    <property type="evidence" value="ECO:0007669"/>
    <property type="project" value="TreeGrafter"/>
</dbReference>
<dbReference type="CDD" id="cd01998">
    <property type="entry name" value="MnmA_TRMU-like"/>
    <property type="match status" value="1"/>
</dbReference>
<dbReference type="FunFam" id="2.30.30.280:FF:000001">
    <property type="entry name" value="tRNA-specific 2-thiouridylase MnmA"/>
    <property type="match status" value="1"/>
</dbReference>
<dbReference type="FunFam" id="3.40.50.620:FF:000115">
    <property type="entry name" value="tRNA-specific 2-thiouridylase MnmA"/>
    <property type="match status" value="1"/>
</dbReference>
<dbReference type="Gene3D" id="2.30.30.280">
    <property type="entry name" value="Adenine nucleotide alpha hydrolases-like domains"/>
    <property type="match status" value="1"/>
</dbReference>
<dbReference type="Gene3D" id="3.40.50.620">
    <property type="entry name" value="HUPs"/>
    <property type="match status" value="1"/>
</dbReference>
<dbReference type="Gene3D" id="2.40.30.10">
    <property type="entry name" value="Translation factors"/>
    <property type="match status" value="1"/>
</dbReference>
<dbReference type="HAMAP" id="MF_00144">
    <property type="entry name" value="tRNA_thiouridyl_MnmA"/>
    <property type="match status" value="1"/>
</dbReference>
<dbReference type="InterPro" id="IPR004506">
    <property type="entry name" value="MnmA-like"/>
</dbReference>
<dbReference type="InterPro" id="IPR046885">
    <property type="entry name" value="MnmA-like_C"/>
</dbReference>
<dbReference type="InterPro" id="IPR046884">
    <property type="entry name" value="MnmA-like_central"/>
</dbReference>
<dbReference type="InterPro" id="IPR023382">
    <property type="entry name" value="MnmA-like_central_sf"/>
</dbReference>
<dbReference type="InterPro" id="IPR014729">
    <property type="entry name" value="Rossmann-like_a/b/a_fold"/>
</dbReference>
<dbReference type="NCBIfam" id="NF001138">
    <property type="entry name" value="PRK00143.1"/>
    <property type="match status" value="1"/>
</dbReference>
<dbReference type="NCBIfam" id="TIGR00420">
    <property type="entry name" value="trmU"/>
    <property type="match status" value="1"/>
</dbReference>
<dbReference type="PANTHER" id="PTHR11933:SF5">
    <property type="entry name" value="MITOCHONDRIAL TRNA-SPECIFIC 2-THIOURIDYLASE 1"/>
    <property type="match status" value="1"/>
</dbReference>
<dbReference type="PANTHER" id="PTHR11933">
    <property type="entry name" value="TRNA 5-METHYLAMINOMETHYL-2-THIOURIDYLATE -METHYLTRANSFERASE"/>
    <property type="match status" value="1"/>
</dbReference>
<dbReference type="Pfam" id="PF03054">
    <property type="entry name" value="tRNA_Me_trans"/>
    <property type="match status" value="1"/>
</dbReference>
<dbReference type="Pfam" id="PF20258">
    <property type="entry name" value="tRNA_Me_trans_C"/>
    <property type="match status" value="1"/>
</dbReference>
<dbReference type="Pfam" id="PF20259">
    <property type="entry name" value="tRNA_Me_trans_M"/>
    <property type="match status" value="1"/>
</dbReference>
<dbReference type="SUPFAM" id="SSF52402">
    <property type="entry name" value="Adenine nucleotide alpha hydrolases-like"/>
    <property type="match status" value="1"/>
</dbReference>
<gene>
    <name evidence="1" type="primary">mnmA</name>
    <name type="ordered locus">WD_1259</name>
</gene>
<protein>
    <recommendedName>
        <fullName evidence="1">tRNA-specific 2-thiouridylase MnmA</fullName>
        <ecNumber evidence="1">2.8.1.13</ecNumber>
    </recommendedName>
</protein>
<proteinExistence type="inferred from homology"/>
<evidence type="ECO:0000255" key="1">
    <source>
        <dbReference type="HAMAP-Rule" id="MF_00144"/>
    </source>
</evidence>
<keyword id="KW-0067">ATP-binding</keyword>
<keyword id="KW-0963">Cytoplasm</keyword>
<keyword id="KW-1015">Disulfide bond</keyword>
<keyword id="KW-0547">Nucleotide-binding</keyword>
<keyword id="KW-0694">RNA-binding</keyword>
<keyword id="KW-0808">Transferase</keyword>
<keyword id="KW-0819">tRNA processing</keyword>
<keyword id="KW-0820">tRNA-binding</keyword>